<sequence length="122" mass="13469">MIQMQTNLDVADNSGARRVQCIKVLGGSKRKYASVGDIIVVSVKEAIPRGRVKKGDVRKAVVVRTAKEVRREDGTAIRFDRNAAVILNNNNEPVGTRIFGPVVRELRAKNFMKIISLAPEVL</sequence>
<accession>Q5LW48</accession>
<reference key="1">
    <citation type="journal article" date="2004" name="Nature">
        <title>Genome sequence of Silicibacter pomeroyi reveals adaptations to the marine environment.</title>
        <authorList>
            <person name="Moran M.A."/>
            <person name="Buchan A."/>
            <person name="Gonzalez J.M."/>
            <person name="Heidelberg J.F."/>
            <person name="Whitman W.B."/>
            <person name="Kiene R.P."/>
            <person name="Henriksen J.R."/>
            <person name="King G.M."/>
            <person name="Belas R."/>
            <person name="Fuqua C."/>
            <person name="Brinkac L.M."/>
            <person name="Lewis M."/>
            <person name="Johri S."/>
            <person name="Weaver B."/>
            <person name="Pai G."/>
            <person name="Eisen J.A."/>
            <person name="Rahe E."/>
            <person name="Sheldon W.M."/>
            <person name="Ye W."/>
            <person name="Miller T.R."/>
            <person name="Carlton J."/>
            <person name="Rasko D.A."/>
            <person name="Paulsen I.T."/>
            <person name="Ren Q."/>
            <person name="Daugherty S.C."/>
            <person name="DeBoy R.T."/>
            <person name="Dodson R.J."/>
            <person name="Durkin A.S."/>
            <person name="Madupu R."/>
            <person name="Nelson W.C."/>
            <person name="Sullivan S.A."/>
            <person name="Rosovitz M.J."/>
            <person name="Haft D.H."/>
            <person name="Selengut J."/>
            <person name="Ward N."/>
        </authorList>
    </citation>
    <scope>NUCLEOTIDE SEQUENCE [LARGE SCALE GENOMIC DNA]</scope>
    <source>
        <strain>ATCC 700808 / DSM 15171 / DSS-3</strain>
    </source>
</reference>
<reference key="2">
    <citation type="journal article" date="2014" name="Stand. Genomic Sci.">
        <title>An updated genome annotation for the model marine bacterium Ruegeria pomeroyi DSS-3.</title>
        <authorList>
            <person name="Rivers A.R."/>
            <person name="Smith C.B."/>
            <person name="Moran M.A."/>
        </authorList>
    </citation>
    <scope>GENOME REANNOTATION</scope>
    <source>
        <strain>ATCC 700808 / DSM 15171 / DSS-3</strain>
    </source>
</reference>
<proteinExistence type="inferred from homology"/>
<dbReference type="EMBL" id="CP000031">
    <property type="protein sequence ID" value="AAV93812.1"/>
    <property type="molecule type" value="Genomic_DNA"/>
</dbReference>
<dbReference type="RefSeq" id="WP_005621870.1">
    <property type="nucleotide sequence ID" value="NC_003911.12"/>
</dbReference>
<dbReference type="SMR" id="Q5LW48"/>
<dbReference type="STRING" id="246200.SPO0495"/>
<dbReference type="PaxDb" id="246200-SPO0495"/>
<dbReference type="GeneID" id="78398336"/>
<dbReference type="KEGG" id="sil:SPO0495"/>
<dbReference type="eggNOG" id="COG0093">
    <property type="taxonomic scope" value="Bacteria"/>
</dbReference>
<dbReference type="HOGENOM" id="CLU_095071_2_1_5"/>
<dbReference type="OrthoDB" id="9806379at2"/>
<dbReference type="Proteomes" id="UP000001023">
    <property type="component" value="Chromosome"/>
</dbReference>
<dbReference type="GO" id="GO:0022625">
    <property type="term" value="C:cytosolic large ribosomal subunit"/>
    <property type="evidence" value="ECO:0007669"/>
    <property type="project" value="TreeGrafter"/>
</dbReference>
<dbReference type="GO" id="GO:0070180">
    <property type="term" value="F:large ribosomal subunit rRNA binding"/>
    <property type="evidence" value="ECO:0007669"/>
    <property type="project" value="TreeGrafter"/>
</dbReference>
<dbReference type="GO" id="GO:0003735">
    <property type="term" value="F:structural constituent of ribosome"/>
    <property type="evidence" value="ECO:0007669"/>
    <property type="project" value="InterPro"/>
</dbReference>
<dbReference type="GO" id="GO:0006412">
    <property type="term" value="P:translation"/>
    <property type="evidence" value="ECO:0007669"/>
    <property type="project" value="UniProtKB-UniRule"/>
</dbReference>
<dbReference type="CDD" id="cd00337">
    <property type="entry name" value="Ribosomal_uL14"/>
    <property type="match status" value="1"/>
</dbReference>
<dbReference type="FunFam" id="2.40.150.20:FF:000001">
    <property type="entry name" value="50S ribosomal protein L14"/>
    <property type="match status" value="1"/>
</dbReference>
<dbReference type="Gene3D" id="2.40.150.20">
    <property type="entry name" value="Ribosomal protein L14"/>
    <property type="match status" value="1"/>
</dbReference>
<dbReference type="HAMAP" id="MF_01367">
    <property type="entry name" value="Ribosomal_uL14"/>
    <property type="match status" value="1"/>
</dbReference>
<dbReference type="InterPro" id="IPR000218">
    <property type="entry name" value="Ribosomal_uL14"/>
</dbReference>
<dbReference type="InterPro" id="IPR005745">
    <property type="entry name" value="Ribosomal_uL14_bac-type"/>
</dbReference>
<dbReference type="InterPro" id="IPR019972">
    <property type="entry name" value="Ribosomal_uL14_CS"/>
</dbReference>
<dbReference type="InterPro" id="IPR036853">
    <property type="entry name" value="Ribosomal_uL14_sf"/>
</dbReference>
<dbReference type="NCBIfam" id="TIGR01067">
    <property type="entry name" value="rplN_bact"/>
    <property type="match status" value="1"/>
</dbReference>
<dbReference type="PANTHER" id="PTHR11761">
    <property type="entry name" value="50S/60S RIBOSOMAL PROTEIN L14/L23"/>
    <property type="match status" value="1"/>
</dbReference>
<dbReference type="PANTHER" id="PTHR11761:SF3">
    <property type="entry name" value="LARGE RIBOSOMAL SUBUNIT PROTEIN UL14M"/>
    <property type="match status" value="1"/>
</dbReference>
<dbReference type="Pfam" id="PF00238">
    <property type="entry name" value="Ribosomal_L14"/>
    <property type="match status" value="1"/>
</dbReference>
<dbReference type="SMART" id="SM01374">
    <property type="entry name" value="Ribosomal_L14"/>
    <property type="match status" value="1"/>
</dbReference>
<dbReference type="SUPFAM" id="SSF50193">
    <property type="entry name" value="Ribosomal protein L14"/>
    <property type="match status" value="1"/>
</dbReference>
<dbReference type="PROSITE" id="PS00049">
    <property type="entry name" value="RIBOSOMAL_L14"/>
    <property type="match status" value="1"/>
</dbReference>
<protein>
    <recommendedName>
        <fullName evidence="1">Large ribosomal subunit protein uL14</fullName>
    </recommendedName>
    <alternativeName>
        <fullName evidence="2">50S ribosomal protein L14</fullName>
    </alternativeName>
</protein>
<name>RL14_RUEPO</name>
<evidence type="ECO:0000255" key="1">
    <source>
        <dbReference type="HAMAP-Rule" id="MF_01367"/>
    </source>
</evidence>
<evidence type="ECO:0000305" key="2"/>
<feature type="chain" id="PRO_0000266563" description="Large ribosomal subunit protein uL14">
    <location>
        <begin position="1"/>
        <end position="122"/>
    </location>
</feature>
<organism>
    <name type="scientific">Ruegeria pomeroyi (strain ATCC 700808 / DSM 15171 / DSS-3)</name>
    <name type="common">Silicibacter pomeroyi</name>
    <dbReference type="NCBI Taxonomy" id="246200"/>
    <lineage>
        <taxon>Bacteria</taxon>
        <taxon>Pseudomonadati</taxon>
        <taxon>Pseudomonadota</taxon>
        <taxon>Alphaproteobacteria</taxon>
        <taxon>Rhodobacterales</taxon>
        <taxon>Roseobacteraceae</taxon>
        <taxon>Ruegeria</taxon>
    </lineage>
</organism>
<comment type="function">
    <text evidence="1">Binds to 23S rRNA. Forms part of two intersubunit bridges in the 70S ribosome.</text>
</comment>
<comment type="subunit">
    <text evidence="1">Part of the 50S ribosomal subunit. Forms a cluster with proteins L3 and L19. In the 70S ribosome, L14 and L19 interact and together make contacts with the 16S rRNA in bridges B5 and B8.</text>
</comment>
<comment type="similarity">
    <text evidence="1">Belongs to the universal ribosomal protein uL14 family.</text>
</comment>
<keyword id="KW-1185">Reference proteome</keyword>
<keyword id="KW-0687">Ribonucleoprotein</keyword>
<keyword id="KW-0689">Ribosomal protein</keyword>
<keyword id="KW-0694">RNA-binding</keyword>
<keyword id="KW-0699">rRNA-binding</keyword>
<gene>
    <name evidence="1" type="primary">rplN</name>
    <name type="ordered locus">SPO0495</name>
</gene>